<gene>
    <name evidence="1" type="primary">eno</name>
    <name type="ordered locus">MGAS10750_Spy0639</name>
</gene>
<protein>
    <recommendedName>
        <fullName evidence="1">Enolase</fullName>
        <ecNumber evidence="1">4.2.1.11</ecNumber>
    </recommendedName>
    <alternativeName>
        <fullName evidence="1">2-phospho-D-glycerate hydro-lyase</fullName>
    </alternativeName>
    <alternativeName>
        <fullName evidence="1">2-phosphoglycerate dehydratase</fullName>
    </alternativeName>
</protein>
<keyword id="KW-0134">Cell wall</keyword>
<keyword id="KW-0963">Cytoplasm</keyword>
<keyword id="KW-0324">Glycolysis</keyword>
<keyword id="KW-0456">Lyase</keyword>
<keyword id="KW-0460">Magnesium</keyword>
<keyword id="KW-0479">Metal-binding</keyword>
<keyword id="KW-0964">Secreted</keyword>
<organism>
    <name type="scientific">Streptococcus pyogenes serotype M4 (strain MGAS10750)</name>
    <dbReference type="NCBI Taxonomy" id="370554"/>
    <lineage>
        <taxon>Bacteria</taxon>
        <taxon>Bacillati</taxon>
        <taxon>Bacillota</taxon>
        <taxon>Bacilli</taxon>
        <taxon>Lactobacillales</taxon>
        <taxon>Streptococcaceae</taxon>
        <taxon>Streptococcus</taxon>
    </lineage>
</organism>
<accession>Q1J7I5</accession>
<proteinExistence type="inferred from homology"/>
<sequence length="435" mass="47356">MSIITDVYAREVLDSRGNPTLEVEVYTESGAFGRGMVPSGASTGEHEAVELRDGDKSRYLGLGTQKAVDNVNNIIAEAIIGYDVRDQQAIDRAMIALDGTPNKGKLGANAILGVSIAVARAAADYLEVPLYTYLGGFNTKVLPTPMMNIINGGSHSDAPIAFQEFMIMPVGAPTFKEGLRWGAEVFHALKKILKERGLVTAVGDEGGFAPKFEGTEDGVETILKAIEAAGYEAGENGIMIGFDCASSEFYDKERKVYDYTKFEGEGAAVRTSAEQVDYLEELVNKYPIITIEDGMDENDWDGWKVLTERLGKRVQLVGDDFFVTNTEYLARGIKENAANSILIKVNQIGTLTETFEAIEMAKEAGYTAVVSHRSGETEDSTIADIAVATNAGQIKTGSLSRTDRIAKYNQLLRIEDQLGEVAQYKGIKSFYNLKK</sequence>
<evidence type="ECO:0000255" key="1">
    <source>
        <dbReference type="HAMAP-Rule" id="MF_00318"/>
    </source>
</evidence>
<evidence type="ECO:0000269" key="2">
    <source>
    </source>
</evidence>
<evidence type="ECO:0000305" key="3">
    <source>
    </source>
</evidence>
<comment type="function">
    <text evidence="1">Catalyzes the reversible conversion of 2-phosphoglycerate (2-PG) into phosphoenolpyruvate (PEP). It is essential for the degradation of carbohydrates via glycolysis.</text>
</comment>
<comment type="catalytic activity">
    <reaction evidence="1">
        <text>(2R)-2-phosphoglycerate = phosphoenolpyruvate + H2O</text>
        <dbReference type="Rhea" id="RHEA:10164"/>
        <dbReference type="ChEBI" id="CHEBI:15377"/>
        <dbReference type="ChEBI" id="CHEBI:58289"/>
        <dbReference type="ChEBI" id="CHEBI:58702"/>
        <dbReference type="EC" id="4.2.1.11"/>
    </reaction>
</comment>
<comment type="cofactor">
    <cofactor evidence="1">
        <name>Mg(2+)</name>
        <dbReference type="ChEBI" id="CHEBI:18420"/>
    </cofactor>
    <text evidence="1">Binds a second Mg(2+) ion via substrate during catalysis.</text>
</comment>
<comment type="pathway">
    <text evidence="1">Carbohydrate degradation; glycolysis; pyruvate from D-glyceraldehyde 3-phosphate: step 4/5.</text>
</comment>
<comment type="subcellular location">
    <subcellularLocation>
        <location evidence="1">Cytoplasm</location>
    </subcellularLocation>
    <subcellularLocation>
        <location evidence="1">Secreted</location>
    </subcellularLocation>
    <subcellularLocation>
        <location evidence="1 3">Cell surface</location>
    </subcellularLocation>
    <subcellularLocation>
        <location evidence="2">Secreted</location>
        <location evidence="2">Cell wall</location>
    </subcellularLocation>
    <text evidence="1 3">Fractions of enolase are present in both the cytoplasm and on the cell surface (Probable) (PubMed:9603964).</text>
</comment>
<comment type="similarity">
    <text evidence="1">Belongs to the enolase family.</text>
</comment>
<feature type="chain" id="PRO_0000267120" description="Enolase">
    <location>
        <begin position="1"/>
        <end position="435"/>
    </location>
</feature>
<feature type="active site" description="Proton donor" evidence="1">
    <location>
        <position position="205"/>
    </location>
</feature>
<feature type="active site" description="Proton acceptor" evidence="1">
    <location>
        <position position="344"/>
    </location>
</feature>
<feature type="binding site" evidence="1">
    <location>
        <position position="163"/>
    </location>
    <ligand>
        <name>(2R)-2-phosphoglycerate</name>
        <dbReference type="ChEBI" id="CHEBI:58289"/>
    </ligand>
</feature>
<feature type="binding site" evidence="1">
    <location>
        <position position="243"/>
    </location>
    <ligand>
        <name>Mg(2+)</name>
        <dbReference type="ChEBI" id="CHEBI:18420"/>
    </ligand>
</feature>
<feature type="binding site" evidence="1">
    <location>
        <position position="292"/>
    </location>
    <ligand>
        <name>Mg(2+)</name>
        <dbReference type="ChEBI" id="CHEBI:18420"/>
    </ligand>
</feature>
<feature type="binding site" evidence="1">
    <location>
        <position position="319"/>
    </location>
    <ligand>
        <name>Mg(2+)</name>
        <dbReference type="ChEBI" id="CHEBI:18420"/>
    </ligand>
</feature>
<feature type="binding site" evidence="1">
    <location>
        <position position="344"/>
    </location>
    <ligand>
        <name>(2R)-2-phosphoglycerate</name>
        <dbReference type="ChEBI" id="CHEBI:58289"/>
    </ligand>
</feature>
<feature type="binding site" evidence="1">
    <location>
        <position position="373"/>
    </location>
    <ligand>
        <name>(2R)-2-phosphoglycerate</name>
        <dbReference type="ChEBI" id="CHEBI:58289"/>
    </ligand>
</feature>
<feature type="binding site" evidence="1">
    <location>
        <position position="374"/>
    </location>
    <ligand>
        <name>(2R)-2-phosphoglycerate</name>
        <dbReference type="ChEBI" id="CHEBI:58289"/>
    </ligand>
</feature>
<feature type="binding site" evidence="1">
    <location>
        <position position="395"/>
    </location>
    <ligand>
        <name>(2R)-2-phosphoglycerate</name>
        <dbReference type="ChEBI" id="CHEBI:58289"/>
    </ligand>
</feature>
<name>ENO_STRPF</name>
<dbReference type="EC" id="4.2.1.11" evidence="1"/>
<dbReference type="EMBL" id="CP000262">
    <property type="protein sequence ID" value="ABF37589.1"/>
    <property type="molecule type" value="Genomic_DNA"/>
</dbReference>
<dbReference type="SMR" id="Q1J7I5"/>
<dbReference type="KEGG" id="spi:MGAS10750_Spy0639"/>
<dbReference type="HOGENOM" id="CLU_031223_2_1_9"/>
<dbReference type="UniPathway" id="UPA00109">
    <property type="reaction ID" value="UER00187"/>
</dbReference>
<dbReference type="Proteomes" id="UP000002434">
    <property type="component" value="Chromosome"/>
</dbReference>
<dbReference type="GO" id="GO:0009986">
    <property type="term" value="C:cell surface"/>
    <property type="evidence" value="ECO:0007669"/>
    <property type="project" value="UniProtKB-SubCell"/>
</dbReference>
<dbReference type="GO" id="GO:0005576">
    <property type="term" value="C:extracellular region"/>
    <property type="evidence" value="ECO:0007669"/>
    <property type="project" value="UniProtKB-SubCell"/>
</dbReference>
<dbReference type="GO" id="GO:0009274">
    <property type="term" value="C:peptidoglycan-based cell wall"/>
    <property type="evidence" value="ECO:0000314"/>
    <property type="project" value="CAFA"/>
</dbReference>
<dbReference type="GO" id="GO:0000015">
    <property type="term" value="C:phosphopyruvate hydratase complex"/>
    <property type="evidence" value="ECO:0007669"/>
    <property type="project" value="InterPro"/>
</dbReference>
<dbReference type="GO" id="GO:0000287">
    <property type="term" value="F:magnesium ion binding"/>
    <property type="evidence" value="ECO:0007669"/>
    <property type="project" value="UniProtKB-UniRule"/>
</dbReference>
<dbReference type="GO" id="GO:0004634">
    <property type="term" value="F:phosphopyruvate hydratase activity"/>
    <property type="evidence" value="ECO:0007669"/>
    <property type="project" value="UniProtKB-UniRule"/>
</dbReference>
<dbReference type="GO" id="GO:0006096">
    <property type="term" value="P:glycolytic process"/>
    <property type="evidence" value="ECO:0007669"/>
    <property type="project" value="UniProtKB-UniRule"/>
</dbReference>
<dbReference type="CDD" id="cd03313">
    <property type="entry name" value="enolase"/>
    <property type="match status" value="1"/>
</dbReference>
<dbReference type="FunFam" id="3.20.20.120:FF:000001">
    <property type="entry name" value="Enolase"/>
    <property type="match status" value="1"/>
</dbReference>
<dbReference type="FunFam" id="3.30.390.10:FF:000001">
    <property type="entry name" value="Enolase"/>
    <property type="match status" value="1"/>
</dbReference>
<dbReference type="Gene3D" id="3.20.20.120">
    <property type="entry name" value="Enolase-like C-terminal domain"/>
    <property type="match status" value="1"/>
</dbReference>
<dbReference type="Gene3D" id="3.30.390.10">
    <property type="entry name" value="Enolase-like, N-terminal domain"/>
    <property type="match status" value="1"/>
</dbReference>
<dbReference type="HAMAP" id="MF_00318">
    <property type="entry name" value="Enolase"/>
    <property type="match status" value="1"/>
</dbReference>
<dbReference type="InterPro" id="IPR000941">
    <property type="entry name" value="Enolase"/>
</dbReference>
<dbReference type="InterPro" id="IPR036849">
    <property type="entry name" value="Enolase-like_C_sf"/>
</dbReference>
<dbReference type="InterPro" id="IPR029017">
    <property type="entry name" value="Enolase-like_N"/>
</dbReference>
<dbReference type="InterPro" id="IPR020810">
    <property type="entry name" value="Enolase_C"/>
</dbReference>
<dbReference type="InterPro" id="IPR020809">
    <property type="entry name" value="Enolase_CS"/>
</dbReference>
<dbReference type="InterPro" id="IPR020811">
    <property type="entry name" value="Enolase_N"/>
</dbReference>
<dbReference type="NCBIfam" id="TIGR01060">
    <property type="entry name" value="eno"/>
    <property type="match status" value="1"/>
</dbReference>
<dbReference type="PANTHER" id="PTHR11902">
    <property type="entry name" value="ENOLASE"/>
    <property type="match status" value="1"/>
</dbReference>
<dbReference type="PANTHER" id="PTHR11902:SF1">
    <property type="entry name" value="ENOLASE"/>
    <property type="match status" value="1"/>
</dbReference>
<dbReference type="Pfam" id="PF00113">
    <property type="entry name" value="Enolase_C"/>
    <property type="match status" value="1"/>
</dbReference>
<dbReference type="Pfam" id="PF03952">
    <property type="entry name" value="Enolase_N"/>
    <property type="match status" value="1"/>
</dbReference>
<dbReference type="PIRSF" id="PIRSF001400">
    <property type="entry name" value="Enolase"/>
    <property type="match status" value="1"/>
</dbReference>
<dbReference type="PRINTS" id="PR00148">
    <property type="entry name" value="ENOLASE"/>
</dbReference>
<dbReference type="SFLD" id="SFLDS00001">
    <property type="entry name" value="Enolase"/>
    <property type="match status" value="1"/>
</dbReference>
<dbReference type="SFLD" id="SFLDF00002">
    <property type="entry name" value="enolase"/>
    <property type="match status" value="1"/>
</dbReference>
<dbReference type="SMART" id="SM01192">
    <property type="entry name" value="Enolase_C"/>
    <property type="match status" value="1"/>
</dbReference>
<dbReference type="SMART" id="SM01193">
    <property type="entry name" value="Enolase_N"/>
    <property type="match status" value="1"/>
</dbReference>
<dbReference type="SUPFAM" id="SSF51604">
    <property type="entry name" value="Enolase C-terminal domain-like"/>
    <property type="match status" value="1"/>
</dbReference>
<dbReference type="SUPFAM" id="SSF54826">
    <property type="entry name" value="Enolase N-terminal domain-like"/>
    <property type="match status" value="1"/>
</dbReference>
<dbReference type="PROSITE" id="PS00164">
    <property type="entry name" value="ENOLASE"/>
    <property type="match status" value="1"/>
</dbReference>
<reference key="1">
    <citation type="journal article" date="2006" name="Proc. Natl. Acad. Sci. U.S.A.">
        <title>Molecular genetic anatomy of inter- and intraserotype variation in the human bacterial pathogen group A Streptococcus.</title>
        <authorList>
            <person name="Beres S.B."/>
            <person name="Richter E.W."/>
            <person name="Nagiec M.J."/>
            <person name="Sumby P."/>
            <person name="Porcella S.F."/>
            <person name="DeLeo F.R."/>
            <person name="Musser J.M."/>
        </authorList>
    </citation>
    <scope>NUCLEOTIDE SEQUENCE [LARGE SCALE GENOMIC DNA]</scope>
    <source>
        <strain>MGAS10750</strain>
    </source>
</reference>
<reference key="2">
    <citation type="journal article" date="1998" name="J. Biol. Chem.">
        <title>Alpha-enolase, a novel strong plasmin(ogen) binding protein on the surface of pathogenic streptococci.</title>
        <authorList>
            <person name="Pancholi V."/>
            <person name="Fischetti V.A."/>
        </authorList>
    </citation>
    <scope>SUBCELLULAR LOCATION</scope>
    <source>
        <strain>F694 / Serotype M4</strain>
    </source>
</reference>